<proteinExistence type="inferred from homology"/>
<reference key="1">
    <citation type="journal article" date="2008" name="Proc. Natl. Acad. Sci. U.S.A.">
        <title>The genome of Clostridium kluyveri, a strict anaerobe with unique metabolic features.</title>
        <authorList>
            <person name="Seedorf H."/>
            <person name="Fricke W.F."/>
            <person name="Veith B."/>
            <person name="Brueggemann H."/>
            <person name="Liesegang H."/>
            <person name="Strittmatter A."/>
            <person name="Miethke M."/>
            <person name="Buckel W."/>
            <person name="Hinderberger J."/>
            <person name="Li F."/>
            <person name="Hagemeier C."/>
            <person name="Thauer R.K."/>
            <person name="Gottschalk G."/>
        </authorList>
    </citation>
    <scope>NUCLEOTIDE SEQUENCE [LARGE SCALE GENOMIC DNA]</scope>
    <source>
        <strain>ATCC 8527 / DSM 555 / NBRC 12016 / NCIMB 10680 / K1</strain>
    </source>
</reference>
<keyword id="KW-0133">Cell shape</keyword>
<keyword id="KW-0961">Cell wall biogenesis/degradation</keyword>
<keyword id="KW-0413">Isomerase</keyword>
<keyword id="KW-0573">Peptidoglycan synthesis</keyword>
<keyword id="KW-1185">Reference proteome</keyword>
<evidence type="ECO:0000255" key="1">
    <source>
        <dbReference type="HAMAP-Rule" id="MF_00258"/>
    </source>
</evidence>
<gene>
    <name evidence="1" type="primary">murI</name>
    <name type="ordered locus">CKL_0131</name>
</gene>
<name>MURI_CLOK5</name>
<dbReference type="EC" id="5.1.1.3" evidence="1"/>
<dbReference type="EMBL" id="CP000673">
    <property type="protein sequence ID" value="EDK32201.1"/>
    <property type="molecule type" value="Genomic_DNA"/>
</dbReference>
<dbReference type="RefSeq" id="WP_011988727.1">
    <property type="nucleotide sequence ID" value="NC_009706.1"/>
</dbReference>
<dbReference type="SMR" id="A5N4H0"/>
<dbReference type="STRING" id="431943.CKL_0131"/>
<dbReference type="KEGG" id="ckl:CKL_0131"/>
<dbReference type="eggNOG" id="COG0796">
    <property type="taxonomic scope" value="Bacteria"/>
</dbReference>
<dbReference type="HOGENOM" id="CLU_052344_2_1_9"/>
<dbReference type="UniPathway" id="UPA00219"/>
<dbReference type="Proteomes" id="UP000002411">
    <property type="component" value="Chromosome"/>
</dbReference>
<dbReference type="GO" id="GO:0008881">
    <property type="term" value="F:glutamate racemase activity"/>
    <property type="evidence" value="ECO:0007669"/>
    <property type="project" value="UniProtKB-UniRule"/>
</dbReference>
<dbReference type="GO" id="GO:0071555">
    <property type="term" value="P:cell wall organization"/>
    <property type="evidence" value="ECO:0007669"/>
    <property type="project" value="UniProtKB-KW"/>
</dbReference>
<dbReference type="GO" id="GO:0009252">
    <property type="term" value="P:peptidoglycan biosynthetic process"/>
    <property type="evidence" value="ECO:0007669"/>
    <property type="project" value="UniProtKB-UniRule"/>
</dbReference>
<dbReference type="GO" id="GO:0008360">
    <property type="term" value="P:regulation of cell shape"/>
    <property type="evidence" value="ECO:0007669"/>
    <property type="project" value="UniProtKB-KW"/>
</dbReference>
<dbReference type="FunFam" id="3.40.50.1860:FF:000001">
    <property type="entry name" value="Glutamate racemase"/>
    <property type="match status" value="1"/>
</dbReference>
<dbReference type="Gene3D" id="3.40.50.1860">
    <property type="match status" value="2"/>
</dbReference>
<dbReference type="HAMAP" id="MF_00258">
    <property type="entry name" value="Glu_racemase"/>
    <property type="match status" value="1"/>
</dbReference>
<dbReference type="InterPro" id="IPR015942">
    <property type="entry name" value="Asp/Glu/hydantoin_racemase"/>
</dbReference>
<dbReference type="InterPro" id="IPR001920">
    <property type="entry name" value="Asp/Glu_race"/>
</dbReference>
<dbReference type="InterPro" id="IPR018187">
    <property type="entry name" value="Asp/Glu_racemase_AS_1"/>
</dbReference>
<dbReference type="InterPro" id="IPR033134">
    <property type="entry name" value="Asp/Glu_racemase_AS_2"/>
</dbReference>
<dbReference type="InterPro" id="IPR004391">
    <property type="entry name" value="Glu_race"/>
</dbReference>
<dbReference type="NCBIfam" id="TIGR00067">
    <property type="entry name" value="glut_race"/>
    <property type="match status" value="1"/>
</dbReference>
<dbReference type="PANTHER" id="PTHR21198">
    <property type="entry name" value="GLUTAMATE RACEMASE"/>
    <property type="match status" value="1"/>
</dbReference>
<dbReference type="PANTHER" id="PTHR21198:SF3">
    <property type="entry name" value="GLUTAMATE RACEMASE"/>
    <property type="match status" value="1"/>
</dbReference>
<dbReference type="Pfam" id="PF01177">
    <property type="entry name" value="Asp_Glu_race"/>
    <property type="match status" value="1"/>
</dbReference>
<dbReference type="SUPFAM" id="SSF53681">
    <property type="entry name" value="Aspartate/glutamate racemase"/>
    <property type="match status" value="2"/>
</dbReference>
<dbReference type="PROSITE" id="PS00923">
    <property type="entry name" value="ASP_GLU_RACEMASE_1"/>
    <property type="match status" value="1"/>
</dbReference>
<dbReference type="PROSITE" id="PS00924">
    <property type="entry name" value="ASP_GLU_RACEMASE_2"/>
    <property type="match status" value="1"/>
</dbReference>
<comment type="function">
    <text evidence="1">Provides the (R)-glutamate required for cell wall biosynthesis.</text>
</comment>
<comment type="catalytic activity">
    <reaction evidence="1">
        <text>L-glutamate = D-glutamate</text>
        <dbReference type="Rhea" id="RHEA:12813"/>
        <dbReference type="ChEBI" id="CHEBI:29985"/>
        <dbReference type="ChEBI" id="CHEBI:29986"/>
        <dbReference type="EC" id="5.1.1.3"/>
    </reaction>
</comment>
<comment type="pathway">
    <text evidence="1">Cell wall biogenesis; peptidoglycan biosynthesis.</text>
</comment>
<comment type="similarity">
    <text evidence="1">Belongs to the aspartate/glutamate racemases family.</text>
</comment>
<organism>
    <name type="scientific">Clostridium kluyveri (strain ATCC 8527 / DSM 555 / NBRC 12016 / NCIMB 10680 / K1)</name>
    <dbReference type="NCBI Taxonomy" id="431943"/>
    <lineage>
        <taxon>Bacteria</taxon>
        <taxon>Bacillati</taxon>
        <taxon>Bacillota</taxon>
        <taxon>Clostridia</taxon>
        <taxon>Eubacteriales</taxon>
        <taxon>Clostridiaceae</taxon>
        <taxon>Clostridium</taxon>
    </lineage>
</organism>
<feature type="chain" id="PRO_1000078557" description="Glutamate racemase">
    <location>
        <begin position="1"/>
        <end position="257"/>
    </location>
</feature>
<feature type="active site" description="Proton donor/acceptor" evidence="1">
    <location>
        <position position="75"/>
    </location>
</feature>
<feature type="active site" description="Proton donor/acceptor" evidence="1">
    <location>
        <position position="186"/>
    </location>
</feature>
<feature type="binding site" evidence="1">
    <location>
        <begin position="12"/>
        <end position="13"/>
    </location>
    <ligand>
        <name>substrate</name>
    </ligand>
</feature>
<feature type="binding site" evidence="1">
    <location>
        <begin position="44"/>
        <end position="45"/>
    </location>
    <ligand>
        <name>substrate</name>
    </ligand>
</feature>
<feature type="binding site" evidence="1">
    <location>
        <begin position="76"/>
        <end position="77"/>
    </location>
    <ligand>
        <name>substrate</name>
    </ligand>
</feature>
<feature type="binding site" evidence="1">
    <location>
        <begin position="187"/>
        <end position="188"/>
    </location>
    <ligand>
        <name>substrate</name>
    </ligand>
</feature>
<accession>A5N4H0</accession>
<protein>
    <recommendedName>
        <fullName evidence="1">Glutamate racemase</fullName>
        <ecNumber evidence="1">5.1.1.3</ecNumber>
    </recommendedName>
</protein>
<sequence length="257" mass="28641">MDSEDRPIGFFDSGVGGISVLKEAVKILSNENFVYFGDSKMAPYGVRTVEEVKKLTFNAVEFLLKKNIKALVVACNTATSAAIIDLRKAYSKYMPIVGIEPALKPAVECNRKGNIIIMATPMTLAESKFNNLMKRYSNSNILPLPCSGLVELIEEGKTEGEEIERYLEEKLIPLKGNGIAAVVLGCTHYPFIKKSISKVLNQDVLILDGSKGTVRQLKRQLIKYHIESNKSKIGKIKIFNSMNSQYIIKLSYKLLKE</sequence>